<protein>
    <recommendedName>
        <fullName evidence="1">Adenylate kinase</fullName>
        <shortName evidence="1">AK</shortName>
        <ecNumber evidence="1">2.7.4.3</ecNumber>
    </recommendedName>
    <alternativeName>
        <fullName evidence="1">ATP-AMP transphosphorylase</fullName>
    </alternativeName>
    <alternativeName>
        <fullName evidence="1">ATP:AMP phosphotransferase</fullName>
    </alternativeName>
    <alternativeName>
        <fullName evidence="1">Adenylate monophosphate kinase</fullName>
    </alternativeName>
</protein>
<comment type="function">
    <text evidence="1">Catalyzes the reversible transfer of the terminal phosphate group between ATP and AMP. Plays an important role in cellular energy homeostasis and in adenine nucleotide metabolism.</text>
</comment>
<comment type="catalytic activity">
    <reaction evidence="1">
        <text>AMP + ATP = 2 ADP</text>
        <dbReference type="Rhea" id="RHEA:12973"/>
        <dbReference type="ChEBI" id="CHEBI:30616"/>
        <dbReference type="ChEBI" id="CHEBI:456215"/>
        <dbReference type="ChEBI" id="CHEBI:456216"/>
        <dbReference type="EC" id="2.7.4.3"/>
    </reaction>
</comment>
<comment type="pathway">
    <text evidence="1">Purine metabolism; AMP biosynthesis via salvage pathway; AMP from ADP: step 1/1.</text>
</comment>
<comment type="subunit">
    <text evidence="1">Monomer.</text>
</comment>
<comment type="subcellular location">
    <subcellularLocation>
        <location evidence="1">Cytoplasm</location>
    </subcellularLocation>
</comment>
<comment type="domain">
    <text evidence="1">Consists of three domains, a large central CORE domain and two small peripheral domains, NMPbind and LID, which undergo movements during catalysis. The LID domain closes over the site of phosphoryl transfer upon ATP binding. Assembling and dissambling the active center during each catalytic cycle provides an effective means to prevent ATP hydrolysis. Some bacteria have evolved a zinc-coordinating structure that stabilizes the LID domain.</text>
</comment>
<comment type="similarity">
    <text evidence="1">Belongs to the adenylate kinase family.</text>
</comment>
<organism>
    <name type="scientific">Haloarcula marismortui (strain ATCC 43049 / DSM 3752 / JCM 8966 / VKM B-1809)</name>
    <name type="common">Halobacterium marismortui</name>
    <dbReference type="NCBI Taxonomy" id="272569"/>
    <lineage>
        <taxon>Archaea</taxon>
        <taxon>Methanobacteriati</taxon>
        <taxon>Methanobacteriota</taxon>
        <taxon>Stenosarchaea group</taxon>
        <taxon>Halobacteria</taxon>
        <taxon>Halobacteriales</taxon>
        <taxon>Haloarculaceae</taxon>
        <taxon>Haloarcula</taxon>
    </lineage>
</organism>
<feature type="chain" id="PRO_0000158897" description="Adenylate kinase">
    <location>
        <begin position="1"/>
        <end position="216"/>
    </location>
</feature>
<feature type="region of interest" description="NMP" evidence="1">
    <location>
        <begin position="33"/>
        <end position="66"/>
    </location>
</feature>
<feature type="region of interest" description="LID" evidence="1">
    <location>
        <begin position="125"/>
        <end position="162"/>
    </location>
</feature>
<feature type="binding site" evidence="1">
    <location>
        <begin position="13"/>
        <end position="18"/>
    </location>
    <ligand>
        <name>ATP</name>
        <dbReference type="ChEBI" id="CHEBI:30616"/>
    </ligand>
</feature>
<feature type="binding site" evidence="1">
    <location>
        <position position="34"/>
    </location>
    <ligand>
        <name>AMP</name>
        <dbReference type="ChEBI" id="CHEBI:456215"/>
    </ligand>
</feature>
<feature type="binding site" evidence="1">
    <location>
        <position position="39"/>
    </location>
    <ligand>
        <name>AMP</name>
        <dbReference type="ChEBI" id="CHEBI:456215"/>
    </ligand>
</feature>
<feature type="binding site" evidence="1">
    <location>
        <begin position="64"/>
        <end position="66"/>
    </location>
    <ligand>
        <name>AMP</name>
        <dbReference type="ChEBI" id="CHEBI:456215"/>
    </ligand>
</feature>
<feature type="binding site" evidence="1">
    <location>
        <begin position="89"/>
        <end position="92"/>
    </location>
    <ligand>
        <name>AMP</name>
        <dbReference type="ChEBI" id="CHEBI:456215"/>
    </ligand>
</feature>
<feature type="binding site" evidence="1">
    <location>
        <position position="96"/>
    </location>
    <ligand>
        <name>AMP</name>
        <dbReference type="ChEBI" id="CHEBI:456215"/>
    </ligand>
</feature>
<feature type="binding site" evidence="1">
    <location>
        <position position="126"/>
    </location>
    <ligand>
        <name>ATP</name>
        <dbReference type="ChEBI" id="CHEBI:30616"/>
    </ligand>
</feature>
<feature type="binding site" evidence="1">
    <location>
        <position position="129"/>
    </location>
    <ligand>
        <name>Zn(2+)</name>
        <dbReference type="ChEBI" id="CHEBI:29105"/>
        <note>structural</note>
    </ligand>
</feature>
<feature type="binding site" evidence="1">
    <location>
        <position position="132"/>
    </location>
    <ligand>
        <name>Zn(2+)</name>
        <dbReference type="ChEBI" id="CHEBI:29105"/>
        <note>structural</note>
    </ligand>
</feature>
<feature type="binding site" evidence="1">
    <location>
        <position position="149"/>
    </location>
    <ligand>
        <name>Zn(2+)</name>
        <dbReference type="ChEBI" id="CHEBI:29105"/>
        <note>structural</note>
    </ligand>
</feature>
<feature type="binding site" evidence="1">
    <location>
        <position position="152"/>
    </location>
    <ligand>
        <name>Zn(2+)</name>
        <dbReference type="ChEBI" id="CHEBI:29105"/>
        <note>structural</note>
    </ligand>
</feature>
<feature type="binding site" evidence="1">
    <location>
        <position position="159"/>
    </location>
    <ligand>
        <name>AMP</name>
        <dbReference type="ChEBI" id="CHEBI:456215"/>
    </ligand>
</feature>
<feature type="binding site" evidence="1">
    <location>
        <position position="170"/>
    </location>
    <ligand>
        <name>AMP</name>
        <dbReference type="ChEBI" id="CHEBI:456215"/>
    </ligand>
</feature>
<feature type="binding site" evidence="1">
    <location>
        <position position="198"/>
    </location>
    <ligand>
        <name>ATP</name>
        <dbReference type="ChEBI" id="CHEBI:30616"/>
    </ligand>
</feature>
<accession>Q5UXG8</accession>
<keyword id="KW-0067">ATP-binding</keyword>
<keyword id="KW-0963">Cytoplasm</keyword>
<keyword id="KW-0418">Kinase</keyword>
<keyword id="KW-0479">Metal-binding</keyword>
<keyword id="KW-0545">Nucleotide biosynthesis</keyword>
<keyword id="KW-0547">Nucleotide-binding</keyword>
<keyword id="KW-1185">Reference proteome</keyword>
<keyword id="KW-0808">Transferase</keyword>
<keyword id="KW-0862">Zinc</keyword>
<dbReference type="EC" id="2.7.4.3" evidence="1"/>
<dbReference type="EMBL" id="AY596297">
    <property type="protein sequence ID" value="AAV48035.1"/>
    <property type="molecule type" value="Genomic_DNA"/>
</dbReference>
<dbReference type="RefSeq" id="WP_011224746.1">
    <property type="nucleotide sequence ID" value="NC_006396.1"/>
</dbReference>
<dbReference type="SMR" id="Q5UXG8"/>
<dbReference type="STRING" id="272569.rrnAC3346"/>
<dbReference type="PaxDb" id="272569-rrnAC3346"/>
<dbReference type="EnsemblBacteria" id="AAV48035">
    <property type="protein sequence ID" value="AAV48035"/>
    <property type="gene ID" value="rrnAC3346"/>
</dbReference>
<dbReference type="GeneID" id="40154140"/>
<dbReference type="KEGG" id="hma:rrnAC3346"/>
<dbReference type="PATRIC" id="fig|272569.17.peg.3871"/>
<dbReference type="eggNOG" id="arCOG01046">
    <property type="taxonomic scope" value="Archaea"/>
</dbReference>
<dbReference type="HOGENOM" id="CLU_032354_1_2_2"/>
<dbReference type="UniPathway" id="UPA00588">
    <property type="reaction ID" value="UER00649"/>
</dbReference>
<dbReference type="Proteomes" id="UP000001169">
    <property type="component" value="Chromosome I"/>
</dbReference>
<dbReference type="GO" id="GO:0005737">
    <property type="term" value="C:cytoplasm"/>
    <property type="evidence" value="ECO:0007669"/>
    <property type="project" value="UniProtKB-SubCell"/>
</dbReference>
<dbReference type="GO" id="GO:0004017">
    <property type="term" value="F:adenylate kinase activity"/>
    <property type="evidence" value="ECO:0007669"/>
    <property type="project" value="UniProtKB-UniRule"/>
</dbReference>
<dbReference type="GO" id="GO:0005524">
    <property type="term" value="F:ATP binding"/>
    <property type="evidence" value="ECO:0007669"/>
    <property type="project" value="UniProtKB-UniRule"/>
</dbReference>
<dbReference type="GO" id="GO:0008270">
    <property type="term" value="F:zinc ion binding"/>
    <property type="evidence" value="ECO:0007669"/>
    <property type="project" value="UniProtKB-UniRule"/>
</dbReference>
<dbReference type="GO" id="GO:0044209">
    <property type="term" value="P:AMP salvage"/>
    <property type="evidence" value="ECO:0007669"/>
    <property type="project" value="UniProtKB-UniRule"/>
</dbReference>
<dbReference type="CDD" id="cd01428">
    <property type="entry name" value="ADK"/>
    <property type="match status" value="1"/>
</dbReference>
<dbReference type="FunFam" id="3.40.50.300:FF:000106">
    <property type="entry name" value="Adenylate kinase mitochondrial"/>
    <property type="match status" value="1"/>
</dbReference>
<dbReference type="Gene3D" id="3.40.50.300">
    <property type="entry name" value="P-loop containing nucleotide triphosphate hydrolases"/>
    <property type="match status" value="1"/>
</dbReference>
<dbReference type="HAMAP" id="MF_00235">
    <property type="entry name" value="Adenylate_kinase_Adk"/>
    <property type="match status" value="1"/>
</dbReference>
<dbReference type="InterPro" id="IPR006259">
    <property type="entry name" value="Adenyl_kin_sub"/>
</dbReference>
<dbReference type="InterPro" id="IPR000850">
    <property type="entry name" value="Adenylat/UMP-CMP_kin"/>
</dbReference>
<dbReference type="InterPro" id="IPR033690">
    <property type="entry name" value="Adenylat_kinase_CS"/>
</dbReference>
<dbReference type="InterPro" id="IPR007862">
    <property type="entry name" value="Adenylate_kinase_lid-dom"/>
</dbReference>
<dbReference type="InterPro" id="IPR027417">
    <property type="entry name" value="P-loop_NTPase"/>
</dbReference>
<dbReference type="NCBIfam" id="TIGR01351">
    <property type="entry name" value="adk"/>
    <property type="match status" value="1"/>
</dbReference>
<dbReference type="NCBIfam" id="NF011103">
    <property type="entry name" value="PRK14530.1"/>
    <property type="match status" value="1"/>
</dbReference>
<dbReference type="PANTHER" id="PTHR23359">
    <property type="entry name" value="NUCLEOTIDE KINASE"/>
    <property type="match status" value="1"/>
</dbReference>
<dbReference type="Pfam" id="PF00406">
    <property type="entry name" value="ADK"/>
    <property type="match status" value="1"/>
</dbReference>
<dbReference type="Pfam" id="PF05191">
    <property type="entry name" value="ADK_lid"/>
    <property type="match status" value="1"/>
</dbReference>
<dbReference type="PRINTS" id="PR00094">
    <property type="entry name" value="ADENYLTKNASE"/>
</dbReference>
<dbReference type="SUPFAM" id="SSF52540">
    <property type="entry name" value="P-loop containing nucleoside triphosphate hydrolases"/>
    <property type="match status" value="1"/>
</dbReference>
<dbReference type="PROSITE" id="PS00113">
    <property type="entry name" value="ADENYLATE_KINASE"/>
    <property type="match status" value="1"/>
</dbReference>
<evidence type="ECO:0000255" key="1">
    <source>
        <dbReference type="HAMAP-Rule" id="MF_00235"/>
    </source>
</evidence>
<proteinExistence type="inferred from homology"/>
<reference key="1">
    <citation type="journal article" date="2004" name="Genome Res.">
        <title>Genome sequence of Haloarcula marismortui: a halophilic archaeon from the Dead Sea.</title>
        <authorList>
            <person name="Baliga N.S."/>
            <person name="Bonneau R."/>
            <person name="Facciotti M.T."/>
            <person name="Pan M."/>
            <person name="Glusman G."/>
            <person name="Deutsch E.W."/>
            <person name="Shannon P."/>
            <person name="Chiu Y."/>
            <person name="Weng R.S."/>
            <person name="Gan R.R."/>
            <person name="Hung P."/>
            <person name="Date S.V."/>
            <person name="Marcotte E."/>
            <person name="Hood L."/>
            <person name="Ng W.V."/>
        </authorList>
    </citation>
    <scope>NUCLEOTIDE SEQUENCE [LARGE SCALE GENOMIC DNA]</scope>
    <source>
        <strain>ATCC 43049 / DSM 3752 / JCM 8966 / VKM B-1809</strain>
    </source>
</reference>
<name>KAD_HALMA</name>
<sequence>MSNPRILIVGPPGAGKGTQSANLAEAYGVEHITTGDALRANKDMDISDMDTEYDTPREYMEAGDLVPDAVVNAIVDEALSQADGFVLDGYPRNLEQAEELEGMTALDVILSLDVSREELVDRLTGRRVCDDCGTNYHVEFNQPEEDGVCDECGGDLIQRDDDNEESVRNRLDVFDDNTAPVIDHYGDHDGFVAIDGEQTPDEVWSEIQDAVDAHTA</sequence>
<gene>
    <name evidence="1" type="primary">adk</name>
    <name type="ordered locus">rrnAC3346</name>
</gene>